<gene>
    <name evidence="1" type="primary">sstT</name>
    <name type="ordered locus">Sfri_2707</name>
</gene>
<feature type="chain" id="PRO_0000309122" description="Serine/threonine transporter SstT">
    <location>
        <begin position="1"/>
        <end position="413"/>
    </location>
</feature>
<feature type="transmembrane region" description="Helical" evidence="1">
    <location>
        <begin position="11"/>
        <end position="31"/>
    </location>
</feature>
<feature type="transmembrane region" description="Helical" evidence="1">
    <location>
        <begin position="43"/>
        <end position="63"/>
    </location>
</feature>
<feature type="transmembrane region" description="Helical" evidence="1">
    <location>
        <begin position="82"/>
        <end position="102"/>
    </location>
</feature>
<feature type="transmembrane region" description="Helical" evidence="1">
    <location>
        <begin position="141"/>
        <end position="161"/>
    </location>
</feature>
<feature type="transmembrane region" description="Helical" evidence="1">
    <location>
        <begin position="192"/>
        <end position="212"/>
    </location>
</feature>
<feature type="transmembrane region" description="Helical" evidence="1">
    <location>
        <begin position="216"/>
        <end position="236"/>
    </location>
</feature>
<feature type="transmembrane region" description="Helical" evidence="1">
    <location>
        <begin position="298"/>
        <end position="318"/>
    </location>
</feature>
<feature type="transmembrane region" description="Helical" evidence="1">
    <location>
        <begin position="339"/>
        <end position="359"/>
    </location>
</feature>
<feature type="transmembrane region" description="Helical" evidence="1">
    <location>
        <begin position="363"/>
        <end position="383"/>
    </location>
</feature>
<sequence>MNQKTSLLARIANGSLVLQIISGIILGVILASISTTGANNVAFLGSLFVGALKAIAPILVFVLVASSIANQKKNSQTNMRPIIGLYLLGTFVAALTAVLFSFAFPTTLLLTTGIEGTNPPQGISEVINTLLFKIVDNPVNALLTGNYIGILVWGAGLGITMHHASDSTKRMLSDVSDAVSNIVRFVIRLAPIGIFGLVAATFAETGFDALAGYGQLLMVLVGSMLFIALVINPIIVYVKIKRNPYPLVFKCLRESGVTAFFTRSSAANIPVNMALCEELKLHKDTYSVSIPLGATINMGGAAITITVLTLAAAHTLGIQVDFMTALLLSVIASVSACGASGVAGGSLLLIPLACSLFGISNDVAMQVVAVGFIIGVIQDSAETALNSSTDVIFTAAACEAAEAKEAKQAAQVS</sequence>
<organism>
    <name type="scientific">Shewanella frigidimarina (strain NCIMB 400)</name>
    <dbReference type="NCBI Taxonomy" id="318167"/>
    <lineage>
        <taxon>Bacteria</taxon>
        <taxon>Pseudomonadati</taxon>
        <taxon>Pseudomonadota</taxon>
        <taxon>Gammaproteobacteria</taxon>
        <taxon>Alteromonadales</taxon>
        <taxon>Shewanellaceae</taxon>
        <taxon>Shewanella</taxon>
    </lineage>
</organism>
<comment type="function">
    <text evidence="1">Involved in the import of serine and threonine into the cell, with the concomitant import of sodium (symport system).</text>
</comment>
<comment type="catalytic activity">
    <reaction evidence="1">
        <text>L-serine(in) + Na(+)(in) = L-serine(out) + Na(+)(out)</text>
        <dbReference type="Rhea" id="RHEA:29575"/>
        <dbReference type="ChEBI" id="CHEBI:29101"/>
        <dbReference type="ChEBI" id="CHEBI:33384"/>
    </reaction>
    <physiologicalReaction direction="right-to-left" evidence="1">
        <dbReference type="Rhea" id="RHEA:29577"/>
    </physiologicalReaction>
</comment>
<comment type="catalytic activity">
    <reaction evidence="1">
        <text>L-threonine(in) + Na(+)(in) = L-threonine(out) + Na(+)(out)</text>
        <dbReference type="Rhea" id="RHEA:69999"/>
        <dbReference type="ChEBI" id="CHEBI:29101"/>
        <dbReference type="ChEBI" id="CHEBI:57926"/>
    </reaction>
    <physiologicalReaction direction="right-to-left" evidence="1">
        <dbReference type="Rhea" id="RHEA:70001"/>
    </physiologicalReaction>
</comment>
<comment type="subcellular location">
    <subcellularLocation>
        <location evidence="1">Cell inner membrane</location>
        <topology evidence="1">Multi-pass membrane protein</topology>
    </subcellularLocation>
</comment>
<comment type="similarity">
    <text evidence="1">Belongs to the dicarboxylate/amino acid:cation symporter (DAACS) (TC 2.A.23) family.</text>
</comment>
<keyword id="KW-0029">Amino-acid transport</keyword>
<keyword id="KW-0997">Cell inner membrane</keyword>
<keyword id="KW-1003">Cell membrane</keyword>
<keyword id="KW-0472">Membrane</keyword>
<keyword id="KW-1185">Reference proteome</keyword>
<keyword id="KW-0769">Symport</keyword>
<keyword id="KW-0812">Transmembrane</keyword>
<keyword id="KW-1133">Transmembrane helix</keyword>
<keyword id="KW-0813">Transport</keyword>
<name>SSTT_SHEFN</name>
<proteinExistence type="inferred from homology"/>
<protein>
    <recommendedName>
        <fullName evidence="1">Serine/threonine transporter SstT</fullName>
    </recommendedName>
    <alternativeName>
        <fullName evidence="1">Na(+)/serine-threonine symporter</fullName>
    </alternativeName>
</protein>
<accession>Q07ZL7</accession>
<dbReference type="EMBL" id="CP000447">
    <property type="protein sequence ID" value="ABI72547.1"/>
    <property type="molecule type" value="Genomic_DNA"/>
</dbReference>
<dbReference type="RefSeq" id="WP_011638156.1">
    <property type="nucleotide sequence ID" value="NC_008345.1"/>
</dbReference>
<dbReference type="SMR" id="Q07ZL7"/>
<dbReference type="STRING" id="318167.Sfri_2707"/>
<dbReference type="KEGG" id="sfr:Sfri_2707"/>
<dbReference type="eggNOG" id="COG3633">
    <property type="taxonomic scope" value="Bacteria"/>
</dbReference>
<dbReference type="HOGENOM" id="CLU_044581_0_0_6"/>
<dbReference type="OrthoDB" id="9768885at2"/>
<dbReference type="Proteomes" id="UP000000684">
    <property type="component" value="Chromosome"/>
</dbReference>
<dbReference type="GO" id="GO:0005886">
    <property type="term" value="C:plasma membrane"/>
    <property type="evidence" value="ECO:0007669"/>
    <property type="project" value="UniProtKB-SubCell"/>
</dbReference>
<dbReference type="GO" id="GO:0005295">
    <property type="term" value="F:neutral L-amino acid:sodium symporter activity"/>
    <property type="evidence" value="ECO:0007669"/>
    <property type="project" value="TreeGrafter"/>
</dbReference>
<dbReference type="GO" id="GO:0032329">
    <property type="term" value="P:serine transport"/>
    <property type="evidence" value="ECO:0007669"/>
    <property type="project" value="InterPro"/>
</dbReference>
<dbReference type="GO" id="GO:0015826">
    <property type="term" value="P:threonine transport"/>
    <property type="evidence" value="ECO:0007669"/>
    <property type="project" value="InterPro"/>
</dbReference>
<dbReference type="FunFam" id="1.10.3860.10:FF:000003">
    <property type="entry name" value="Serine/threonine transporter sstT"/>
    <property type="match status" value="1"/>
</dbReference>
<dbReference type="Gene3D" id="1.10.3860.10">
    <property type="entry name" value="Sodium:dicarboxylate symporter"/>
    <property type="match status" value="1"/>
</dbReference>
<dbReference type="HAMAP" id="MF_01582">
    <property type="entry name" value="Ser_Thr_transp_SstT"/>
    <property type="match status" value="1"/>
</dbReference>
<dbReference type="InterPro" id="IPR001991">
    <property type="entry name" value="Na-dicarboxylate_symporter"/>
</dbReference>
<dbReference type="InterPro" id="IPR036458">
    <property type="entry name" value="Na:dicarbo_symporter_sf"/>
</dbReference>
<dbReference type="InterPro" id="IPR023025">
    <property type="entry name" value="Ser_Thr_transp_SstT"/>
</dbReference>
<dbReference type="NCBIfam" id="NF010151">
    <property type="entry name" value="PRK13628.1"/>
    <property type="match status" value="1"/>
</dbReference>
<dbReference type="PANTHER" id="PTHR42865">
    <property type="entry name" value="PROTON/GLUTAMATE-ASPARTATE SYMPORTER"/>
    <property type="match status" value="1"/>
</dbReference>
<dbReference type="PANTHER" id="PTHR42865:SF8">
    <property type="entry name" value="SERINE_THREONINE TRANSPORTER SSTT"/>
    <property type="match status" value="1"/>
</dbReference>
<dbReference type="Pfam" id="PF00375">
    <property type="entry name" value="SDF"/>
    <property type="match status" value="1"/>
</dbReference>
<dbReference type="PRINTS" id="PR00173">
    <property type="entry name" value="EDTRNSPORT"/>
</dbReference>
<dbReference type="SUPFAM" id="SSF118215">
    <property type="entry name" value="Proton glutamate symport protein"/>
    <property type="match status" value="1"/>
</dbReference>
<reference key="1">
    <citation type="submission" date="2006-08" db="EMBL/GenBank/DDBJ databases">
        <title>Complete sequence of Shewanella frigidimarina NCIMB 400.</title>
        <authorList>
            <consortium name="US DOE Joint Genome Institute"/>
            <person name="Copeland A."/>
            <person name="Lucas S."/>
            <person name="Lapidus A."/>
            <person name="Barry K."/>
            <person name="Detter J.C."/>
            <person name="Glavina del Rio T."/>
            <person name="Hammon N."/>
            <person name="Israni S."/>
            <person name="Dalin E."/>
            <person name="Tice H."/>
            <person name="Pitluck S."/>
            <person name="Fredrickson J.K."/>
            <person name="Kolker E."/>
            <person name="McCuel L.A."/>
            <person name="DiChristina T."/>
            <person name="Nealson K.H."/>
            <person name="Newman D."/>
            <person name="Tiedje J.M."/>
            <person name="Zhou J."/>
            <person name="Romine M.F."/>
            <person name="Culley D.E."/>
            <person name="Serres M."/>
            <person name="Chertkov O."/>
            <person name="Brettin T."/>
            <person name="Bruce D."/>
            <person name="Han C."/>
            <person name="Tapia R."/>
            <person name="Gilna P."/>
            <person name="Schmutz J."/>
            <person name="Larimer F."/>
            <person name="Land M."/>
            <person name="Hauser L."/>
            <person name="Kyrpides N."/>
            <person name="Mikhailova N."/>
            <person name="Richardson P."/>
        </authorList>
    </citation>
    <scope>NUCLEOTIDE SEQUENCE [LARGE SCALE GENOMIC DNA]</scope>
    <source>
        <strain>NCIMB 400</strain>
    </source>
</reference>
<evidence type="ECO:0000255" key="1">
    <source>
        <dbReference type="HAMAP-Rule" id="MF_01582"/>
    </source>
</evidence>